<reference key="1">
    <citation type="journal article" date="2011" name="J. Bacteriol.">
        <title>Comparative genomics of 28 Salmonella enterica isolates: evidence for CRISPR-mediated adaptive sublineage evolution.</title>
        <authorList>
            <person name="Fricke W.F."/>
            <person name="Mammel M.K."/>
            <person name="McDermott P.F."/>
            <person name="Tartera C."/>
            <person name="White D.G."/>
            <person name="Leclerc J.E."/>
            <person name="Ravel J."/>
            <person name="Cebula T.A."/>
        </authorList>
    </citation>
    <scope>NUCLEOTIDE SEQUENCE [LARGE SCALE GENOMIC DNA]</scope>
    <source>
        <strain>CVM19633</strain>
    </source>
</reference>
<name>GLSA_SALSV</name>
<dbReference type="EC" id="3.5.1.2" evidence="1"/>
<dbReference type="EMBL" id="CP001127">
    <property type="protein sequence ID" value="ACF91524.1"/>
    <property type="molecule type" value="Genomic_DNA"/>
</dbReference>
<dbReference type="SMR" id="B4TVJ5"/>
<dbReference type="KEGG" id="sew:SeSA_A1630"/>
<dbReference type="HOGENOM" id="CLU_027932_1_1_6"/>
<dbReference type="Proteomes" id="UP000001865">
    <property type="component" value="Chromosome"/>
</dbReference>
<dbReference type="GO" id="GO:0004359">
    <property type="term" value="F:glutaminase activity"/>
    <property type="evidence" value="ECO:0007669"/>
    <property type="project" value="UniProtKB-UniRule"/>
</dbReference>
<dbReference type="GO" id="GO:0006537">
    <property type="term" value="P:glutamate biosynthetic process"/>
    <property type="evidence" value="ECO:0007669"/>
    <property type="project" value="TreeGrafter"/>
</dbReference>
<dbReference type="GO" id="GO:0006543">
    <property type="term" value="P:glutamine catabolic process"/>
    <property type="evidence" value="ECO:0007669"/>
    <property type="project" value="TreeGrafter"/>
</dbReference>
<dbReference type="FunFam" id="3.40.710.10:FF:000005">
    <property type="entry name" value="Glutaminase"/>
    <property type="match status" value="1"/>
</dbReference>
<dbReference type="Gene3D" id="3.40.710.10">
    <property type="entry name" value="DD-peptidase/beta-lactamase superfamily"/>
    <property type="match status" value="1"/>
</dbReference>
<dbReference type="HAMAP" id="MF_00313">
    <property type="entry name" value="Glutaminase"/>
    <property type="match status" value="1"/>
</dbReference>
<dbReference type="InterPro" id="IPR012338">
    <property type="entry name" value="Beta-lactam/transpept-like"/>
</dbReference>
<dbReference type="InterPro" id="IPR015868">
    <property type="entry name" value="Glutaminase"/>
</dbReference>
<dbReference type="NCBIfam" id="TIGR03814">
    <property type="entry name" value="Gln_ase"/>
    <property type="match status" value="1"/>
</dbReference>
<dbReference type="NCBIfam" id="NF002132">
    <property type="entry name" value="PRK00971.1-1"/>
    <property type="match status" value="1"/>
</dbReference>
<dbReference type="NCBIfam" id="NF002133">
    <property type="entry name" value="PRK00971.1-2"/>
    <property type="match status" value="1"/>
</dbReference>
<dbReference type="PANTHER" id="PTHR12544">
    <property type="entry name" value="GLUTAMINASE"/>
    <property type="match status" value="1"/>
</dbReference>
<dbReference type="PANTHER" id="PTHR12544:SF29">
    <property type="entry name" value="GLUTAMINASE"/>
    <property type="match status" value="1"/>
</dbReference>
<dbReference type="Pfam" id="PF04960">
    <property type="entry name" value="Glutaminase"/>
    <property type="match status" value="1"/>
</dbReference>
<dbReference type="SUPFAM" id="SSF56601">
    <property type="entry name" value="beta-lactamase/transpeptidase-like"/>
    <property type="match status" value="1"/>
</dbReference>
<keyword id="KW-0378">Hydrolase</keyword>
<comment type="catalytic activity">
    <reaction evidence="1">
        <text>L-glutamine + H2O = L-glutamate + NH4(+)</text>
        <dbReference type="Rhea" id="RHEA:15889"/>
        <dbReference type="ChEBI" id="CHEBI:15377"/>
        <dbReference type="ChEBI" id="CHEBI:28938"/>
        <dbReference type="ChEBI" id="CHEBI:29985"/>
        <dbReference type="ChEBI" id="CHEBI:58359"/>
        <dbReference type="EC" id="3.5.1.2"/>
    </reaction>
</comment>
<comment type="subunit">
    <text evidence="1">Homotetramer.</text>
</comment>
<comment type="similarity">
    <text evidence="1">Belongs to the glutaminase family.</text>
</comment>
<proteinExistence type="inferred from homology"/>
<organism>
    <name type="scientific">Salmonella schwarzengrund (strain CVM19633)</name>
    <dbReference type="NCBI Taxonomy" id="439843"/>
    <lineage>
        <taxon>Bacteria</taxon>
        <taxon>Pseudomonadati</taxon>
        <taxon>Pseudomonadota</taxon>
        <taxon>Gammaproteobacteria</taxon>
        <taxon>Enterobacterales</taxon>
        <taxon>Enterobacteriaceae</taxon>
        <taxon>Salmonella</taxon>
    </lineage>
</organism>
<feature type="chain" id="PRO_1000115710" description="Glutaminase">
    <location>
        <begin position="1"/>
        <end position="308"/>
    </location>
</feature>
<feature type="binding site" evidence="1">
    <location>
        <position position="66"/>
    </location>
    <ligand>
        <name>substrate</name>
    </ligand>
</feature>
<feature type="binding site" evidence="1">
    <location>
        <position position="117"/>
    </location>
    <ligand>
        <name>substrate</name>
    </ligand>
</feature>
<feature type="binding site" evidence="1">
    <location>
        <position position="161"/>
    </location>
    <ligand>
        <name>substrate</name>
    </ligand>
</feature>
<feature type="binding site" evidence="1">
    <location>
        <position position="168"/>
    </location>
    <ligand>
        <name>substrate</name>
    </ligand>
</feature>
<feature type="binding site" evidence="1">
    <location>
        <position position="192"/>
    </location>
    <ligand>
        <name>substrate</name>
    </ligand>
</feature>
<feature type="binding site" evidence="1">
    <location>
        <position position="244"/>
    </location>
    <ligand>
        <name>substrate</name>
    </ligand>
</feature>
<feature type="binding site" evidence="1">
    <location>
        <position position="262"/>
    </location>
    <ligand>
        <name>substrate</name>
    </ligand>
</feature>
<protein>
    <recommendedName>
        <fullName evidence="1">Glutaminase</fullName>
        <ecNumber evidence="1">3.5.1.2</ecNumber>
    </recommendedName>
</protein>
<gene>
    <name evidence="1" type="primary">glsA</name>
    <name type="ordered locus">SeSA_A1630</name>
</gene>
<evidence type="ECO:0000255" key="1">
    <source>
        <dbReference type="HAMAP-Rule" id="MF_00313"/>
    </source>
</evidence>
<sequence>MARAMDNAILETILQRVRPLIGQGKVADYIPALASVEGSKLGIAICTVDGQHYQAGDAHERFSIQSISKVLSLVVAMRHYPEEEIWQRVGKDPSGSPFNSLVQLEMEQGIPRNPFINAGALVVCDMLQGRLSAPRQRMLEVVRALCGVSDITYDATVARSEFEHSARNAAIAWLMKSFGNFHHDVPTVLQNYFHYCALKMSCMELARTFVFLANQGEAFHLDEPVVTPMQARQINALMATSGMYQNAGEFAWRVGLPAKSGVGGGIVAIVPHEMAIAVWSPELDPAGNSLAGIAALEQLTQTLGRSVY</sequence>
<accession>B4TVJ5</accession>